<gene>
    <name evidence="1" type="primary">nfi</name>
    <name type="ordered locus">TT_C0982</name>
</gene>
<evidence type="ECO:0000255" key="1">
    <source>
        <dbReference type="HAMAP-Rule" id="MF_00801"/>
    </source>
</evidence>
<protein>
    <recommendedName>
        <fullName evidence="1">Endonuclease V</fullName>
        <ecNumber evidence="1">3.1.21.7</ecNumber>
    </recommendedName>
    <alternativeName>
        <fullName evidence="1">Deoxyinosine 3'endonuclease</fullName>
    </alternativeName>
    <alternativeName>
        <fullName evidence="1">Deoxyribonuclease V</fullName>
        <shortName evidence="1">DNase V</shortName>
    </alternativeName>
</protein>
<sequence>MRPPPFPKPAHPEEALALQRALAKKVRLAGSLEGVRRIAALDASHKRGRPLVAVALLYDLEKGPLHVATALLPEEALFPYVPGLLSFREAPAYLEALAALPEAPEALLVDGQGVAHPRGLGIASHLGVHLDLPSVGVAKRLLYGRPEAPLPEEKGAAVRLLAPDGRPLGYVYRSRTGVKPLYVSPGHRVGLEEALRFVRRLPTRFRLPEPLRLAHLEAGRALKALD</sequence>
<organism>
    <name type="scientific">Thermus thermophilus (strain ATCC BAA-163 / DSM 7039 / HB27)</name>
    <dbReference type="NCBI Taxonomy" id="262724"/>
    <lineage>
        <taxon>Bacteria</taxon>
        <taxon>Thermotogati</taxon>
        <taxon>Deinococcota</taxon>
        <taxon>Deinococci</taxon>
        <taxon>Thermales</taxon>
        <taxon>Thermaceae</taxon>
        <taxon>Thermus</taxon>
    </lineage>
</organism>
<dbReference type="EC" id="3.1.21.7" evidence="1"/>
<dbReference type="EMBL" id="AE017221">
    <property type="protein sequence ID" value="AAS81324.1"/>
    <property type="molecule type" value="Genomic_DNA"/>
</dbReference>
<dbReference type="RefSeq" id="WP_011173403.1">
    <property type="nucleotide sequence ID" value="NC_005835.1"/>
</dbReference>
<dbReference type="SMR" id="Q72IZ9"/>
<dbReference type="GeneID" id="3168384"/>
<dbReference type="KEGG" id="tth:TT_C0982"/>
<dbReference type="eggNOG" id="COG1515">
    <property type="taxonomic scope" value="Bacteria"/>
</dbReference>
<dbReference type="HOGENOM" id="CLU_047631_1_0_0"/>
<dbReference type="OrthoDB" id="9790916at2"/>
<dbReference type="Proteomes" id="UP000000592">
    <property type="component" value="Chromosome"/>
</dbReference>
<dbReference type="GO" id="GO:0005737">
    <property type="term" value="C:cytoplasm"/>
    <property type="evidence" value="ECO:0007669"/>
    <property type="project" value="UniProtKB-SubCell"/>
</dbReference>
<dbReference type="GO" id="GO:0043737">
    <property type="term" value="F:deoxyribonuclease V activity"/>
    <property type="evidence" value="ECO:0007669"/>
    <property type="project" value="UniProtKB-UniRule"/>
</dbReference>
<dbReference type="GO" id="GO:0000287">
    <property type="term" value="F:magnesium ion binding"/>
    <property type="evidence" value="ECO:0007669"/>
    <property type="project" value="UniProtKB-UniRule"/>
</dbReference>
<dbReference type="GO" id="GO:0016891">
    <property type="term" value="F:RNA endonuclease activity, producing 5'-phosphomonoesters"/>
    <property type="evidence" value="ECO:0007669"/>
    <property type="project" value="TreeGrafter"/>
</dbReference>
<dbReference type="GO" id="GO:0003727">
    <property type="term" value="F:single-stranded RNA binding"/>
    <property type="evidence" value="ECO:0007669"/>
    <property type="project" value="TreeGrafter"/>
</dbReference>
<dbReference type="GO" id="GO:0006281">
    <property type="term" value="P:DNA repair"/>
    <property type="evidence" value="ECO:0007669"/>
    <property type="project" value="UniProtKB-UniRule"/>
</dbReference>
<dbReference type="CDD" id="cd06559">
    <property type="entry name" value="Endonuclease_V"/>
    <property type="match status" value="1"/>
</dbReference>
<dbReference type="Gene3D" id="3.30.2170.10">
    <property type="entry name" value="archaeoglobus fulgidus dsm 4304 superfamily"/>
    <property type="match status" value="1"/>
</dbReference>
<dbReference type="HAMAP" id="MF_00801">
    <property type="entry name" value="Endonuclease_5"/>
    <property type="match status" value="1"/>
</dbReference>
<dbReference type="InterPro" id="IPR007581">
    <property type="entry name" value="Endonuclease-V"/>
</dbReference>
<dbReference type="PANTHER" id="PTHR28511">
    <property type="entry name" value="ENDONUCLEASE V"/>
    <property type="match status" value="1"/>
</dbReference>
<dbReference type="PANTHER" id="PTHR28511:SF1">
    <property type="entry name" value="ENDONUCLEASE V"/>
    <property type="match status" value="1"/>
</dbReference>
<dbReference type="Pfam" id="PF04493">
    <property type="entry name" value="Endonuclease_5"/>
    <property type="match status" value="1"/>
</dbReference>
<name>NFI_THET2</name>
<proteinExistence type="inferred from homology"/>
<accession>Q72IZ9</accession>
<feature type="chain" id="PRO_0000159675" description="Endonuclease V">
    <location>
        <begin position="1"/>
        <end position="226"/>
    </location>
</feature>
<feature type="binding site" evidence="1">
    <location>
        <position position="42"/>
    </location>
    <ligand>
        <name>Mg(2+)</name>
        <dbReference type="ChEBI" id="CHEBI:18420"/>
    </ligand>
</feature>
<feature type="binding site" evidence="1">
    <location>
        <position position="110"/>
    </location>
    <ligand>
        <name>Mg(2+)</name>
        <dbReference type="ChEBI" id="CHEBI:18420"/>
    </ligand>
</feature>
<feature type="site" description="Interaction with target DNA" evidence="1">
    <location>
        <position position="80"/>
    </location>
</feature>
<reference key="1">
    <citation type="journal article" date="2004" name="Nat. Biotechnol.">
        <title>The genome sequence of the extreme thermophile Thermus thermophilus.</title>
        <authorList>
            <person name="Henne A."/>
            <person name="Brueggemann H."/>
            <person name="Raasch C."/>
            <person name="Wiezer A."/>
            <person name="Hartsch T."/>
            <person name="Liesegang H."/>
            <person name="Johann A."/>
            <person name="Lienard T."/>
            <person name="Gohl O."/>
            <person name="Martinez-Arias R."/>
            <person name="Jacobi C."/>
            <person name="Starkuviene V."/>
            <person name="Schlenczeck S."/>
            <person name="Dencker S."/>
            <person name="Huber R."/>
            <person name="Klenk H.-P."/>
            <person name="Kramer W."/>
            <person name="Merkl R."/>
            <person name="Gottschalk G."/>
            <person name="Fritz H.-J."/>
        </authorList>
    </citation>
    <scope>NUCLEOTIDE SEQUENCE [LARGE SCALE GENOMIC DNA]</scope>
    <source>
        <strain>ATCC BAA-163 / DSM 7039 / HB27</strain>
    </source>
</reference>
<keyword id="KW-0963">Cytoplasm</keyword>
<keyword id="KW-0227">DNA damage</keyword>
<keyword id="KW-0234">DNA repair</keyword>
<keyword id="KW-0255">Endonuclease</keyword>
<keyword id="KW-0378">Hydrolase</keyword>
<keyword id="KW-0460">Magnesium</keyword>
<keyword id="KW-0479">Metal-binding</keyword>
<keyword id="KW-0540">Nuclease</keyword>
<comment type="function">
    <text evidence="1">DNA repair enzyme involved in the repair of deaminated bases. Selectively cleaves double-stranded DNA at the second phosphodiester bond 3' to a deoxyinosine leaving behind the intact lesion on the nicked DNA.</text>
</comment>
<comment type="catalytic activity">
    <reaction evidence="1">
        <text>Endonucleolytic cleavage at apurinic or apyrimidinic sites to products with a 5'-phosphate.</text>
        <dbReference type="EC" id="3.1.21.7"/>
    </reaction>
</comment>
<comment type="cofactor">
    <cofactor evidence="1">
        <name>Mg(2+)</name>
        <dbReference type="ChEBI" id="CHEBI:18420"/>
    </cofactor>
</comment>
<comment type="subcellular location">
    <subcellularLocation>
        <location evidence="1">Cytoplasm</location>
    </subcellularLocation>
</comment>
<comment type="similarity">
    <text evidence="1">Belongs to the endonuclease V family.</text>
</comment>